<feature type="chain" id="PRO_0000387674" description="Propanal dehydrogenase (CoA-propanoylating)">
    <location>
        <begin position="1"/>
        <end position="303"/>
    </location>
</feature>
<feature type="active site" description="Acyl-thioester intermediate" evidence="2">
    <location>
        <position position="127"/>
    </location>
</feature>
<feature type="binding site" evidence="2">
    <location>
        <begin position="12"/>
        <end position="15"/>
    </location>
    <ligand>
        <name>NAD(+)</name>
        <dbReference type="ChEBI" id="CHEBI:57540"/>
    </ligand>
</feature>
<feature type="binding site" evidence="2">
    <location>
        <begin position="158"/>
        <end position="166"/>
    </location>
    <ligand>
        <name>NAD(+)</name>
        <dbReference type="ChEBI" id="CHEBI:57540"/>
    </ligand>
</feature>
<feature type="binding site" evidence="2">
    <location>
        <position position="277"/>
    </location>
    <ligand>
        <name>NAD(+)</name>
        <dbReference type="ChEBI" id="CHEBI:57540"/>
    </ligand>
</feature>
<organism>
    <name type="scientific">Mycobacterium bovis (strain BCG / Pasteur 1173P2)</name>
    <dbReference type="NCBI Taxonomy" id="410289"/>
    <lineage>
        <taxon>Bacteria</taxon>
        <taxon>Bacillati</taxon>
        <taxon>Actinomycetota</taxon>
        <taxon>Actinomycetes</taxon>
        <taxon>Mycobacteriales</taxon>
        <taxon>Mycobacteriaceae</taxon>
        <taxon>Mycobacterium</taxon>
        <taxon>Mycobacterium tuberculosis complex</taxon>
    </lineage>
</organism>
<name>ACDH_MYCBP</name>
<accession>A1KPM0</accession>
<dbReference type="EC" id="1.2.1.87" evidence="1"/>
<dbReference type="EC" id="1.2.1.10" evidence="2"/>
<dbReference type="EMBL" id="AM408590">
    <property type="protein sequence ID" value="CAL73588.1"/>
    <property type="molecule type" value="Genomic_DNA"/>
</dbReference>
<dbReference type="RefSeq" id="WP_003419251.1">
    <property type="nucleotide sequence ID" value="NC_008769.1"/>
</dbReference>
<dbReference type="SMR" id="A1KPM0"/>
<dbReference type="KEGG" id="mbb:BCG_3599c"/>
<dbReference type="HOGENOM" id="CLU_062208_0_0_11"/>
<dbReference type="Proteomes" id="UP000001472">
    <property type="component" value="Chromosome"/>
</dbReference>
<dbReference type="GO" id="GO:0008774">
    <property type="term" value="F:acetaldehyde dehydrogenase (acetylating) activity"/>
    <property type="evidence" value="ECO:0007669"/>
    <property type="project" value="UniProtKB-UniRule"/>
</dbReference>
<dbReference type="GO" id="GO:0051287">
    <property type="term" value="F:NAD binding"/>
    <property type="evidence" value="ECO:0007669"/>
    <property type="project" value="UniProtKB-UniRule"/>
</dbReference>
<dbReference type="GO" id="GO:0009056">
    <property type="term" value="P:catabolic process"/>
    <property type="evidence" value="ECO:0007669"/>
    <property type="project" value="UniProtKB-KW"/>
</dbReference>
<dbReference type="CDD" id="cd23933">
    <property type="entry name" value="ALDH_C"/>
    <property type="match status" value="1"/>
</dbReference>
<dbReference type="Gene3D" id="3.30.360.10">
    <property type="entry name" value="Dihydrodipicolinate Reductase, domain 2"/>
    <property type="match status" value="1"/>
</dbReference>
<dbReference type="Gene3D" id="3.40.50.720">
    <property type="entry name" value="NAD(P)-binding Rossmann-like Domain"/>
    <property type="match status" value="1"/>
</dbReference>
<dbReference type="HAMAP" id="MF_01657">
    <property type="entry name" value="Ac_ald_DH_ac"/>
    <property type="match status" value="1"/>
</dbReference>
<dbReference type="InterPro" id="IPR003361">
    <property type="entry name" value="Acetaldehyde_dehydrogenase"/>
</dbReference>
<dbReference type="InterPro" id="IPR015426">
    <property type="entry name" value="Acetylaldehyde_DH_C"/>
</dbReference>
<dbReference type="InterPro" id="IPR036291">
    <property type="entry name" value="NAD(P)-bd_dom_sf"/>
</dbReference>
<dbReference type="InterPro" id="IPR000534">
    <property type="entry name" value="Semialdehyde_DH_NAD-bd"/>
</dbReference>
<dbReference type="NCBIfam" id="TIGR03215">
    <property type="entry name" value="ac_ald_DH_ac"/>
    <property type="match status" value="1"/>
</dbReference>
<dbReference type="NCBIfam" id="NF006157">
    <property type="entry name" value="PRK08300.1"/>
    <property type="match status" value="1"/>
</dbReference>
<dbReference type="Pfam" id="PF09290">
    <property type="entry name" value="AcetDehyd-dimer"/>
    <property type="match status" value="1"/>
</dbReference>
<dbReference type="Pfam" id="PF01118">
    <property type="entry name" value="Semialdhyde_dh"/>
    <property type="match status" value="1"/>
</dbReference>
<dbReference type="PIRSF" id="PIRSF015689">
    <property type="entry name" value="Actaldh_dh_actl"/>
    <property type="match status" value="1"/>
</dbReference>
<dbReference type="SMART" id="SM00859">
    <property type="entry name" value="Semialdhyde_dh"/>
    <property type="match status" value="1"/>
</dbReference>
<dbReference type="SUPFAM" id="SSF55347">
    <property type="entry name" value="Glyceraldehyde-3-phosphate dehydrogenase-like, C-terminal domain"/>
    <property type="match status" value="1"/>
</dbReference>
<dbReference type="SUPFAM" id="SSF51735">
    <property type="entry name" value="NAD(P)-binding Rossmann-fold domains"/>
    <property type="match status" value="1"/>
</dbReference>
<sequence>MPSKAKVAIVGSGNISTDLLYKLLRSEWLEPRWMVGIDPESDGLARAAKLGLETTHEGVDWLLAQPDKPDLVFEATSAYVHRDAAPKYAEAGIRAIDLTPAAVGPAVIPPANLREHLDAPNVNMITCGGQATIPIVYAVSRIVEVPYAEIVASVASVSAGPGTRANIDEFTKTTARGVQTIGGAARGKAIIILNPADPPMIMRDTIFCAIPTDADREAIAASIHDVVKEVQTYVPGYRLLNEPQFDEPSINSGGQALVTTFVEVEGAGDYLPPYAGNLDIMTAAATKVGEEIAKETLVVGGAR</sequence>
<evidence type="ECO:0000250" key="1">
    <source>
        <dbReference type="UniProtKB" id="P9WQH3"/>
    </source>
</evidence>
<evidence type="ECO:0000255" key="2">
    <source>
        <dbReference type="HAMAP-Rule" id="MF_01657"/>
    </source>
</evidence>
<keyword id="KW-0058">Aromatic hydrocarbons catabolism</keyword>
<keyword id="KW-0520">NAD</keyword>
<keyword id="KW-0560">Oxidoreductase</keyword>
<reference key="1">
    <citation type="journal article" date="2007" name="Proc. Natl. Acad. Sci. U.S.A.">
        <title>Genome plasticity of BCG and impact on vaccine efficacy.</title>
        <authorList>
            <person name="Brosch R."/>
            <person name="Gordon S.V."/>
            <person name="Garnier T."/>
            <person name="Eiglmeier K."/>
            <person name="Frigui W."/>
            <person name="Valenti P."/>
            <person name="Dos Santos S."/>
            <person name="Duthoy S."/>
            <person name="Lacroix C."/>
            <person name="Garcia-Pelayo C."/>
            <person name="Inwald J.K."/>
            <person name="Golby P."/>
            <person name="Garcia J.N."/>
            <person name="Hewinson R.G."/>
            <person name="Behr M.A."/>
            <person name="Quail M.A."/>
            <person name="Churcher C."/>
            <person name="Barrell B.G."/>
            <person name="Parkhill J."/>
            <person name="Cole S.T."/>
        </authorList>
    </citation>
    <scope>NUCLEOTIDE SEQUENCE [LARGE SCALE GENOMIC DNA]</scope>
    <source>
        <strain>BCG / Pasteur 1173P2</strain>
    </source>
</reference>
<protein>
    <recommendedName>
        <fullName evidence="1">Propanal dehydrogenase (CoA-propanoylating)</fullName>
        <ecNumber evidence="1">1.2.1.87</ecNumber>
    </recommendedName>
    <alternativeName>
        <fullName evidence="2">Acetaldehyde dehydrogenase</fullName>
        <ecNumber evidence="2">1.2.1.10</ecNumber>
    </alternativeName>
    <alternativeName>
        <fullName evidence="2">Acetaldehyde dehydrogenase [acetylating]</fullName>
    </alternativeName>
</protein>
<comment type="function">
    <text evidence="1">Involved in cholesterol degradation. Catalyzes the conversion of propanal to propanoyl-CoA, using NAD(+) and coenzyme A.</text>
</comment>
<comment type="catalytic activity">
    <reaction evidence="1">
        <text>propanal + NAD(+) + CoA = propanoyl-CoA + NADH + H(+)</text>
        <dbReference type="Rhea" id="RHEA:36027"/>
        <dbReference type="ChEBI" id="CHEBI:15378"/>
        <dbReference type="ChEBI" id="CHEBI:17153"/>
        <dbReference type="ChEBI" id="CHEBI:57287"/>
        <dbReference type="ChEBI" id="CHEBI:57392"/>
        <dbReference type="ChEBI" id="CHEBI:57540"/>
        <dbReference type="ChEBI" id="CHEBI:57945"/>
        <dbReference type="EC" id="1.2.1.87"/>
    </reaction>
    <physiologicalReaction direction="left-to-right" evidence="1">
        <dbReference type="Rhea" id="RHEA:36028"/>
    </physiologicalReaction>
</comment>
<comment type="catalytic activity">
    <reaction evidence="1 2">
        <text>acetaldehyde + NAD(+) + CoA = acetyl-CoA + NADH + H(+)</text>
        <dbReference type="Rhea" id="RHEA:23288"/>
        <dbReference type="ChEBI" id="CHEBI:15343"/>
        <dbReference type="ChEBI" id="CHEBI:15378"/>
        <dbReference type="ChEBI" id="CHEBI:57287"/>
        <dbReference type="ChEBI" id="CHEBI:57288"/>
        <dbReference type="ChEBI" id="CHEBI:57540"/>
        <dbReference type="ChEBI" id="CHEBI:57945"/>
        <dbReference type="EC" id="1.2.1.10"/>
    </reaction>
    <physiologicalReaction direction="left-to-right" evidence="1">
        <dbReference type="Rhea" id="RHEA:23289"/>
    </physiologicalReaction>
</comment>
<comment type="subunit">
    <text evidence="1">Monomer. Forms a heterotetramer composed of two aldolase (HsaF) and two dehydrogenase (HsaG) subunits.</text>
</comment>
<comment type="similarity">
    <text evidence="2">Belongs to the acetaldehyde dehydrogenase family.</text>
</comment>
<proteinExistence type="inferred from homology"/>
<gene>
    <name evidence="1" type="primary">hsaG</name>
    <name type="ordered locus">BCG_3599c</name>
</gene>